<name>DPH2_CRYNB</name>
<reference key="1">
    <citation type="journal article" date="2005" name="Science">
        <title>The genome of the basidiomycetous yeast and human pathogen Cryptococcus neoformans.</title>
        <authorList>
            <person name="Loftus B.J."/>
            <person name="Fung E."/>
            <person name="Roncaglia P."/>
            <person name="Rowley D."/>
            <person name="Amedeo P."/>
            <person name="Bruno D."/>
            <person name="Vamathevan J."/>
            <person name="Miranda M."/>
            <person name="Anderson I.J."/>
            <person name="Fraser J.A."/>
            <person name="Allen J.E."/>
            <person name="Bosdet I.E."/>
            <person name="Brent M.R."/>
            <person name="Chiu R."/>
            <person name="Doering T.L."/>
            <person name="Donlin M.J."/>
            <person name="D'Souza C.A."/>
            <person name="Fox D.S."/>
            <person name="Grinberg V."/>
            <person name="Fu J."/>
            <person name="Fukushima M."/>
            <person name="Haas B.J."/>
            <person name="Huang J.C."/>
            <person name="Janbon G."/>
            <person name="Jones S.J.M."/>
            <person name="Koo H.L."/>
            <person name="Krzywinski M.I."/>
            <person name="Kwon-Chung K.J."/>
            <person name="Lengeler K.B."/>
            <person name="Maiti R."/>
            <person name="Marra M.A."/>
            <person name="Marra R.E."/>
            <person name="Mathewson C.A."/>
            <person name="Mitchell T.G."/>
            <person name="Pertea M."/>
            <person name="Riggs F.R."/>
            <person name="Salzberg S.L."/>
            <person name="Schein J.E."/>
            <person name="Shvartsbeyn A."/>
            <person name="Shin H."/>
            <person name="Shumway M."/>
            <person name="Specht C.A."/>
            <person name="Suh B.B."/>
            <person name="Tenney A."/>
            <person name="Utterback T.R."/>
            <person name="Wickes B.L."/>
            <person name="Wortman J.R."/>
            <person name="Wye N.H."/>
            <person name="Kronstad J.W."/>
            <person name="Lodge J.K."/>
            <person name="Heitman J."/>
            <person name="Davis R.W."/>
            <person name="Fraser C.M."/>
            <person name="Hyman R.W."/>
        </authorList>
    </citation>
    <scope>NUCLEOTIDE SEQUENCE [LARGE SCALE GENOMIC DNA]</scope>
    <source>
        <strain>B-3501A</strain>
    </source>
</reference>
<comment type="function">
    <text evidence="1">Required for the first step of diphthamide biosynthesis, a post-translational modification of histidine which occurs in elongation factor 2. DPH1 and DPH2 transfer a 3-amino-3-carboxypropyl (ACP) group from S-adenosyl-L-methionine (SAM) to a histidine residue, the reaction is assisted by a reduction system comprising DPH3 and a NADH-dependent reductase, predominantly CBR1 (By similarity). Facilitates the reduction of the catalytic iron-sulfur cluster found in the DPH1 subunit (By similarity).</text>
</comment>
<comment type="cofactor">
    <cofactor evidence="1">
        <name>[4Fe-4S] cluster</name>
        <dbReference type="ChEBI" id="CHEBI:49883"/>
    </cofactor>
    <text evidence="1">Binds 1 [4Fe-4S] cluster per subunit. The cluster facilitates the reduction of the catalytic iron-sulfur cluster in the DPH1 subunit.</text>
</comment>
<comment type="pathway">
    <text evidence="1">Protein modification; peptidyl-diphthamide biosynthesis.</text>
</comment>
<comment type="subunit">
    <text evidence="1">Component of the 2-(3-amino-3-carboxypropyl)histidine synthase complex composed of DPH1, DPH2, DPH3 and a NADH-dependent reductase, predominantly CBR1.</text>
</comment>
<comment type="subcellular location">
    <subcellularLocation>
        <location evidence="1">Cytoplasm</location>
    </subcellularLocation>
</comment>
<comment type="similarity">
    <text evidence="3">Belongs to the DPH1/DPH2 family. DPH2 subfamily.</text>
</comment>
<proteinExistence type="inferred from homology"/>
<protein>
    <recommendedName>
        <fullName evidence="3">2-(3-amino-3-carboxypropyl)histidine synthase subunit 2</fullName>
    </recommendedName>
    <alternativeName>
        <fullName>Diphthamide biosynthesis protein 2</fullName>
    </alternativeName>
    <alternativeName>
        <fullName evidence="3">Diphtheria toxin resistance protein 2</fullName>
    </alternativeName>
    <alternativeName>
        <fullName evidence="3">S-adenosyl-L-methionine:L-histidine 3-amino-3-carboxypropyltransferase 2</fullName>
    </alternativeName>
</protein>
<sequence>MSDAFSTPADHALSHPELEAILENAQAGPSSIGDGAEGMSIEEAFEVDETVRRVLEGDYKTIGLQFPDELLPSSVSVYRAIQTRIAHTGAQAYVLADSTYGNCCPDVLSCLHLPADFLVHYGHACLTPTDALPVHYVFPRQKLDVKQAVESLLAASKNELDGDGRKGIVVVWDVSYDWLANDIRDTFSQDSTIQISFASIQKPTLASQKGLKDVKGKTPALRSVEPPQGLEMNDCVLWYIGEEGRSCMNLQMTHANNPLFIYSPSSQSVSPLHRTTSRLLSRRLFALHQALSADVFGLIVSNIGLASSKPLLAQLREDLKRAKKKSYTLSVGRLNPAKLANFAEIECFVLVGCAEGGVVDSKDFLRPIITPWELELALQGPDHVWAPENWTLDLGTVLKDAQEREIKIKQDSSTADSDDDSLEFSLITGTMRTKKRFAFGNGTHTLENNKLLGDGGVQDLTLRNQNFSLSKLESAGSTFLASREFQGLEPRYGMDEPSVLEQGRSGVARGYTEEK</sequence>
<dbReference type="EMBL" id="AAEY01000064">
    <property type="protein sequence ID" value="EAL17403.1"/>
    <property type="molecule type" value="Genomic_DNA"/>
</dbReference>
<dbReference type="RefSeq" id="XP_772050.1">
    <property type="nucleotide sequence ID" value="XM_766957.1"/>
</dbReference>
<dbReference type="SMR" id="P0CN21"/>
<dbReference type="EnsemblFungi" id="AAW46752">
    <property type="protein sequence ID" value="AAW46752"/>
    <property type="gene ID" value="CNM02230"/>
</dbReference>
<dbReference type="GeneID" id="4939569"/>
<dbReference type="KEGG" id="cnb:CNBM2070"/>
<dbReference type="VEuPathDB" id="FungiDB:CNBM2070"/>
<dbReference type="HOGENOM" id="CLU_015210_1_0_1"/>
<dbReference type="OrthoDB" id="5074at5206"/>
<dbReference type="UniPathway" id="UPA00559"/>
<dbReference type="GO" id="GO:0120513">
    <property type="term" value="C:2-(3-amino-3-carboxypropyl)histidine synthase complex"/>
    <property type="evidence" value="ECO:0000250"/>
    <property type="project" value="UniProtKB"/>
</dbReference>
<dbReference type="GO" id="GO:0005737">
    <property type="term" value="C:cytoplasm"/>
    <property type="evidence" value="ECO:0007669"/>
    <property type="project" value="UniProtKB-SubCell"/>
</dbReference>
<dbReference type="GO" id="GO:0090560">
    <property type="term" value="F:2-(3-amino-3-carboxypropyl)histidine synthase activity"/>
    <property type="evidence" value="ECO:0007669"/>
    <property type="project" value="UniProtKB-EC"/>
</dbReference>
<dbReference type="GO" id="GO:0051539">
    <property type="term" value="F:4 iron, 4 sulfur cluster binding"/>
    <property type="evidence" value="ECO:0000250"/>
    <property type="project" value="UniProtKB"/>
</dbReference>
<dbReference type="GO" id="GO:0046872">
    <property type="term" value="F:metal ion binding"/>
    <property type="evidence" value="ECO:0007669"/>
    <property type="project" value="UniProtKB-KW"/>
</dbReference>
<dbReference type="GO" id="GO:0017183">
    <property type="term" value="P:protein histidyl modification to diphthamide"/>
    <property type="evidence" value="ECO:0000250"/>
    <property type="project" value="UniProtKB"/>
</dbReference>
<dbReference type="FunFam" id="3.40.50.11840:FF:000005">
    <property type="entry name" value="2-(3-amino-3-carboxypropyl)histidine synthase subunit 2"/>
    <property type="match status" value="1"/>
</dbReference>
<dbReference type="FunFam" id="3.40.50.11860:FF:000001">
    <property type="entry name" value="2-(3-amino-3-carboxypropyl)histidine synthase subunit 2"/>
    <property type="match status" value="1"/>
</dbReference>
<dbReference type="Gene3D" id="3.40.50.11840">
    <property type="entry name" value="Diphthamide synthesis DPH1/DPH2 domain 1"/>
    <property type="match status" value="1"/>
</dbReference>
<dbReference type="Gene3D" id="3.40.50.11860">
    <property type="entry name" value="Diphthamide synthesis DPH1/DPH2 domain 3"/>
    <property type="match status" value="1"/>
</dbReference>
<dbReference type="InterPro" id="IPR010014">
    <property type="entry name" value="DHP2"/>
</dbReference>
<dbReference type="InterPro" id="IPR016435">
    <property type="entry name" value="DPH1/DPH2"/>
</dbReference>
<dbReference type="InterPro" id="IPR042263">
    <property type="entry name" value="DPH1/DPH2_1"/>
</dbReference>
<dbReference type="InterPro" id="IPR042265">
    <property type="entry name" value="DPH1/DPH2_3"/>
</dbReference>
<dbReference type="NCBIfam" id="TIGR00322">
    <property type="entry name" value="diphth2_R"/>
    <property type="match status" value="1"/>
</dbReference>
<dbReference type="NCBIfam" id="TIGR00272">
    <property type="entry name" value="DPH2"/>
    <property type="match status" value="1"/>
</dbReference>
<dbReference type="PANTHER" id="PTHR10762:SF2">
    <property type="entry name" value="2-(3-AMINO-3-CARBOXYPROPYL)HISTIDINE SYNTHASE SUBUNIT 2"/>
    <property type="match status" value="1"/>
</dbReference>
<dbReference type="PANTHER" id="PTHR10762">
    <property type="entry name" value="DIPHTHAMIDE BIOSYNTHESIS PROTEIN"/>
    <property type="match status" value="1"/>
</dbReference>
<dbReference type="Pfam" id="PF01866">
    <property type="entry name" value="Diphthamide_syn"/>
    <property type="match status" value="1"/>
</dbReference>
<dbReference type="SFLD" id="SFLDG01121">
    <property type="entry name" value="Diphthamide_biosynthesis"/>
    <property type="match status" value="1"/>
</dbReference>
<dbReference type="SFLD" id="SFLDF00408">
    <property type="entry name" value="Diphthamide_biosynthesis_famil"/>
    <property type="match status" value="1"/>
</dbReference>
<dbReference type="SFLD" id="SFLDS00032">
    <property type="entry name" value="Radical_SAM_3-amino-3-carboxyp"/>
    <property type="match status" value="1"/>
</dbReference>
<accession>P0CN21</accession>
<accession>Q55I10</accession>
<accession>Q5K7J4</accession>
<organism>
    <name type="scientific">Cryptococcus neoformans var. neoformans serotype D (strain B-3501A)</name>
    <name type="common">Filobasidiella neoformans</name>
    <dbReference type="NCBI Taxonomy" id="283643"/>
    <lineage>
        <taxon>Eukaryota</taxon>
        <taxon>Fungi</taxon>
        <taxon>Dikarya</taxon>
        <taxon>Basidiomycota</taxon>
        <taxon>Agaricomycotina</taxon>
        <taxon>Tremellomycetes</taxon>
        <taxon>Tremellales</taxon>
        <taxon>Cryptococcaceae</taxon>
        <taxon>Cryptococcus</taxon>
        <taxon>Cryptococcus neoformans species complex</taxon>
    </lineage>
</organism>
<feature type="chain" id="PRO_0000410064" description="2-(3-amino-3-carboxypropyl)histidine synthase subunit 2">
    <location>
        <begin position="1"/>
        <end position="515"/>
    </location>
</feature>
<feature type="region of interest" description="Disordered" evidence="2">
    <location>
        <begin position="493"/>
        <end position="515"/>
    </location>
</feature>
<feature type="binding site" evidence="1">
    <location>
        <position position="104"/>
    </location>
    <ligand>
        <name>[4Fe-4S] cluster</name>
        <dbReference type="ChEBI" id="CHEBI:49883"/>
    </ligand>
</feature>
<feature type="binding site" evidence="1">
    <location>
        <position position="125"/>
    </location>
    <ligand>
        <name>[4Fe-4S] cluster</name>
        <dbReference type="ChEBI" id="CHEBI:49883"/>
    </ligand>
</feature>
<feature type="binding site" evidence="1">
    <location>
        <position position="353"/>
    </location>
    <ligand>
        <name>[4Fe-4S] cluster</name>
        <dbReference type="ChEBI" id="CHEBI:49883"/>
    </ligand>
</feature>
<evidence type="ECO:0000250" key="1">
    <source>
        <dbReference type="UniProtKB" id="P32461"/>
    </source>
</evidence>
<evidence type="ECO:0000256" key="2">
    <source>
        <dbReference type="SAM" id="MobiDB-lite"/>
    </source>
</evidence>
<evidence type="ECO:0000305" key="3"/>
<keyword id="KW-0963">Cytoplasm</keyword>
<keyword id="KW-0408">Iron</keyword>
<keyword id="KW-0411">Iron-sulfur</keyword>
<keyword id="KW-0479">Metal-binding</keyword>
<gene>
    <name type="primary">DPH2</name>
    <name type="ordered locus">CNBM2070</name>
</gene>